<dbReference type="EC" id="2.5.1.9" evidence="2"/>
<dbReference type="EMBL" id="AM040264">
    <property type="protein sequence ID" value="CAJ10746.1"/>
    <property type="molecule type" value="Genomic_DNA"/>
</dbReference>
<dbReference type="RefSeq" id="WP_002969422.1">
    <property type="nucleotide sequence ID" value="NZ_KN046823.1"/>
</dbReference>
<dbReference type="PDB" id="4E0F">
    <property type="method" value="X-ray"/>
    <property type="resolution" value="2.85 A"/>
    <property type="chains" value="A/B/C=1-202"/>
</dbReference>
<dbReference type="PDB" id="4FXU">
    <property type="method" value="X-ray"/>
    <property type="resolution" value="1.90 A"/>
    <property type="chains" value="A/B/C=1-202"/>
</dbReference>
<dbReference type="PDB" id="4G6I">
    <property type="method" value="X-ray"/>
    <property type="resolution" value="1.78 A"/>
    <property type="chains" value="A/B/C=1-202"/>
</dbReference>
<dbReference type="PDB" id="4GQN">
    <property type="method" value="X-ray"/>
    <property type="resolution" value="1.85 A"/>
    <property type="chains" value="A/B/C=1-202"/>
</dbReference>
<dbReference type="PDBsum" id="4E0F"/>
<dbReference type="PDBsum" id="4FXU"/>
<dbReference type="PDBsum" id="4G6I"/>
<dbReference type="PDBsum" id="4GQN"/>
<dbReference type="SMR" id="Q2YN92"/>
<dbReference type="STRING" id="359391.BAB1_0790"/>
<dbReference type="KEGG" id="bmf:BAB1_0790"/>
<dbReference type="PATRIC" id="fig|359391.11.peg.3101"/>
<dbReference type="HOGENOM" id="CLU_034388_2_2_5"/>
<dbReference type="PhylomeDB" id="Q2YN92"/>
<dbReference type="BRENDA" id="2.5.1.9">
    <property type="organism ID" value="994"/>
</dbReference>
<dbReference type="UniPathway" id="UPA00275">
    <property type="reaction ID" value="UER00405"/>
</dbReference>
<dbReference type="Proteomes" id="UP000002719">
    <property type="component" value="Chromosome I"/>
</dbReference>
<dbReference type="GO" id="GO:1902444">
    <property type="term" value="F:riboflavin binding"/>
    <property type="evidence" value="ECO:0000314"/>
    <property type="project" value="UniProtKB"/>
</dbReference>
<dbReference type="GO" id="GO:0004746">
    <property type="term" value="F:riboflavin synthase activity"/>
    <property type="evidence" value="ECO:0000314"/>
    <property type="project" value="UniProtKB"/>
</dbReference>
<dbReference type="GO" id="GO:0070207">
    <property type="term" value="P:protein homotrimerization"/>
    <property type="evidence" value="ECO:0000314"/>
    <property type="project" value="UniProtKB"/>
</dbReference>
<dbReference type="GO" id="GO:0009231">
    <property type="term" value="P:riboflavin biosynthetic process"/>
    <property type="evidence" value="ECO:0000314"/>
    <property type="project" value="UniProtKB"/>
</dbReference>
<dbReference type="CDD" id="cd00402">
    <property type="entry name" value="Riboflavin_synthase_like"/>
    <property type="match status" value="1"/>
</dbReference>
<dbReference type="FunFam" id="2.40.30.20:FF:000003">
    <property type="entry name" value="Riboflavin synthase, alpha subunit"/>
    <property type="match status" value="1"/>
</dbReference>
<dbReference type="FunFam" id="2.40.30.20:FF:000004">
    <property type="entry name" value="Riboflavin synthase, alpha subunit"/>
    <property type="match status" value="1"/>
</dbReference>
<dbReference type="Gene3D" id="2.40.30.20">
    <property type="match status" value="2"/>
</dbReference>
<dbReference type="InterPro" id="IPR023366">
    <property type="entry name" value="ATP_synth_asu-like_sf"/>
</dbReference>
<dbReference type="InterPro" id="IPR001783">
    <property type="entry name" value="Lumazine-bd"/>
</dbReference>
<dbReference type="InterPro" id="IPR026017">
    <property type="entry name" value="Lumazine-bd_dom"/>
</dbReference>
<dbReference type="InterPro" id="IPR017938">
    <property type="entry name" value="Riboflavin_synthase-like_b-brl"/>
</dbReference>
<dbReference type="NCBIfam" id="NF006767">
    <property type="entry name" value="PRK09289.1"/>
    <property type="match status" value="1"/>
</dbReference>
<dbReference type="NCBIfam" id="TIGR00187">
    <property type="entry name" value="ribE"/>
    <property type="match status" value="1"/>
</dbReference>
<dbReference type="PANTHER" id="PTHR21098:SF12">
    <property type="entry name" value="RIBOFLAVIN SYNTHASE"/>
    <property type="match status" value="1"/>
</dbReference>
<dbReference type="PANTHER" id="PTHR21098">
    <property type="entry name" value="RIBOFLAVIN SYNTHASE ALPHA CHAIN"/>
    <property type="match status" value="1"/>
</dbReference>
<dbReference type="Pfam" id="PF00677">
    <property type="entry name" value="Lum_binding"/>
    <property type="match status" value="2"/>
</dbReference>
<dbReference type="PIRSF" id="PIRSF000498">
    <property type="entry name" value="Riboflavin_syn_A"/>
    <property type="match status" value="1"/>
</dbReference>
<dbReference type="SUPFAM" id="SSF63380">
    <property type="entry name" value="Riboflavin synthase domain-like"/>
    <property type="match status" value="2"/>
</dbReference>
<dbReference type="PROSITE" id="PS51177">
    <property type="entry name" value="LUMAZINE_BIND"/>
    <property type="match status" value="2"/>
</dbReference>
<sequence>MFTGIITDIGKVDRVKPLNEGVLLRIETAYDPETIELGASIACSGVCLTVVALPEKGSNARWFEVEAWEEALRLTTISSWQSGRKINLERSLKLGDEMGGHLVFGHVDGQAEIVERKDEGDAVRFTLRAPEELAPFIAQKGSVALDGTSLTVNGVNANEFDVLLIRHSLEVTTWGERKAGDKVNIEIDQLARYAARLAQYQK</sequence>
<accession>Q2YN92</accession>
<reference key="1">
    <citation type="journal article" date="2005" name="Infect. Immun.">
        <title>Whole-genome analyses of speciation events in pathogenic Brucellae.</title>
        <authorList>
            <person name="Chain P.S."/>
            <person name="Comerci D.J."/>
            <person name="Tolmasky M.E."/>
            <person name="Larimer F.W."/>
            <person name="Malfatti S.A."/>
            <person name="Vergez L.M."/>
            <person name="Aguero F."/>
            <person name="Land M.L."/>
            <person name="Ugalde R.A."/>
            <person name="Garcia E."/>
        </authorList>
    </citation>
    <scope>NUCLEOTIDE SEQUENCE [LARGE SCALE GENOMIC DNA]</scope>
    <source>
        <strain>2308</strain>
    </source>
</reference>
<reference key="2">
    <citation type="journal article" date="2014" name="Acta Crystallogr. D">
        <title>Crystallographic and kinetic study of riboflavin synthase from Brucella abortus, a chemotherapeutic target with an enhanced intrinsic flexibility.</title>
        <authorList>
            <person name="Serer M.I."/>
            <person name="Bonomi H.R."/>
            <person name="Guimaraes B.G."/>
            <person name="Rossi R.C."/>
            <person name="Goldbaum F.A."/>
            <person name="Klinke S."/>
        </authorList>
    </citation>
    <scope>X-RAY CRYSTALLOGRAPHY (1.78 ANGSTROMS) OF APOENZYME AND IN COMPLEXES WITH RIBOFLAVIN AND WITH TWO DIFFERENT PRODUCT ANALOGS</scope>
    <scope>SUBUNIT</scope>
    <scope>FUNCTION</scope>
    <scope>CATALYTIC ACTIVITY</scope>
    <scope>ACTIVITY REGULATION</scope>
    <scope>DOMAIN</scope>
    <source>
        <strain>2308</strain>
    </source>
</reference>
<protein>
    <recommendedName>
        <fullName evidence="3">Riboflavin synthase</fullName>
        <shortName evidence="3">RS</shortName>
        <ecNumber evidence="2">2.5.1.9</ecNumber>
    </recommendedName>
</protein>
<comment type="function">
    <text evidence="2">Catalyzes the dismutation of two molecules of 6,7-dimethyl-8-ribityllumazine, resulting in the formation of riboflavin and 5-amino-6-(D-ribitylamino)uracil.</text>
</comment>
<comment type="catalytic activity">
    <reaction evidence="2">
        <text>2 6,7-dimethyl-8-(1-D-ribityl)lumazine + H(+) = 5-amino-6-(D-ribitylamino)uracil + riboflavin</text>
        <dbReference type="Rhea" id="RHEA:20772"/>
        <dbReference type="ChEBI" id="CHEBI:15378"/>
        <dbReference type="ChEBI" id="CHEBI:15934"/>
        <dbReference type="ChEBI" id="CHEBI:57986"/>
        <dbReference type="ChEBI" id="CHEBI:58201"/>
        <dbReference type="EC" id="2.5.1.9"/>
    </reaction>
</comment>
<comment type="activity regulation">
    <text evidence="2">Is inhibited by riboflavin. Product inhibition may be the major mechanism by which RS regulates its enzymatic activity in vivo.</text>
</comment>
<comment type="pathway">
    <text evidence="4">Cofactor biosynthesis; riboflavin biosynthesis; riboflavin from 2-hydroxy-3-oxobutyl phosphate and 5-amino-6-(D-ribitylamino)uracil: step 2/2.</text>
</comment>
<comment type="subunit">
    <text evidence="2">Homotrimer.</text>
</comment>
<comment type="domain">
    <text evidence="2">Each monomer can bind two substrate molecules, yet there is only one active site for the whole trimeric enzyme, which is located at the interface between two neighboring chains and formed by the N-terminal barrel from chain A and the C-terminal barrel from chain B.</text>
</comment>
<gene>
    <name evidence="3" type="primary">ribE</name>
    <name evidence="5" type="ordered locus">BAB1_0790</name>
</gene>
<organism>
    <name type="scientific">Brucella abortus (strain 2308)</name>
    <dbReference type="NCBI Taxonomy" id="359391"/>
    <lineage>
        <taxon>Bacteria</taxon>
        <taxon>Pseudomonadati</taxon>
        <taxon>Pseudomonadota</taxon>
        <taxon>Alphaproteobacteria</taxon>
        <taxon>Hyphomicrobiales</taxon>
        <taxon>Brucellaceae</taxon>
        <taxon>Brucella/Ochrobactrum group</taxon>
        <taxon>Brucella</taxon>
    </lineage>
</organism>
<proteinExistence type="evidence at protein level"/>
<evidence type="ECO:0000255" key="1">
    <source>
        <dbReference type="PROSITE-ProRule" id="PRU00524"/>
    </source>
</evidence>
<evidence type="ECO:0000269" key="2">
    <source>
    </source>
</evidence>
<evidence type="ECO:0000303" key="3">
    <source>
    </source>
</evidence>
<evidence type="ECO:0000305" key="4">
    <source>
    </source>
</evidence>
<evidence type="ECO:0000312" key="5">
    <source>
        <dbReference type="EMBL" id="CAJ10746.1"/>
    </source>
</evidence>
<feature type="chain" id="PRO_0000435442" description="Riboflavin synthase">
    <location>
        <begin position="1"/>
        <end position="202"/>
    </location>
</feature>
<feature type="repeat" description="Lumazine-binding 1" evidence="1">
    <location>
        <begin position="1"/>
        <end position="101"/>
    </location>
</feature>
<feature type="repeat" description="Lumazine-binding 2" evidence="1">
    <location>
        <begin position="102"/>
        <end position="198"/>
    </location>
</feature>
<feature type="binding site" evidence="4">
    <location>
        <begin position="4"/>
        <end position="6"/>
    </location>
    <ligand>
        <name>2,4-dihydroxypteridine</name>
        <dbReference type="ChEBI" id="CHEBI:16489"/>
        <label>1</label>
    </ligand>
</feature>
<feature type="binding site" evidence="4">
    <location>
        <begin position="47"/>
        <end position="49"/>
    </location>
    <ligand>
        <name>2,4-dihydroxypteridine</name>
        <dbReference type="ChEBI" id="CHEBI:16489"/>
        <label>2</label>
        <note>ligand shared between two trimeric partners</note>
    </ligand>
</feature>
<feature type="binding site" evidence="4">
    <location>
        <begin position="66"/>
        <end position="68"/>
    </location>
    <ligand>
        <name>2,4-dihydroxypteridine</name>
        <dbReference type="ChEBI" id="CHEBI:16489"/>
        <label>2</label>
        <note>ligand shared between two trimeric partners</note>
    </ligand>
</feature>
<feature type="binding site" evidence="4">
    <location>
        <begin position="105"/>
        <end position="107"/>
    </location>
    <ligand>
        <name>2,4-dihydroxypteridine</name>
        <dbReference type="ChEBI" id="CHEBI:16489"/>
        <label>2</label>
        <note>ligand shared between two trimeric partners</note>
    </ligand>
</feature>
<feature type="binding site" description="in other chain" evidence="4">
    <location>
        <position position="140"/>
    </location>
    <ligand>
        <name>2,4-dihydroxypteridine</name>
        <dbReference type="ChEBI" id="CHEBI:16489"/>
        <label>2</label>
        <note>ligand shared between two trimeric partners</note>
    </ligand>
</feature>
<feature type="binding site" evidence="4">
    <location>
        <begin position="149"/>
        <end position="151"/>
    </location>
    <ligand>
        <name>2,4-dihydroxypteridine</name>
        <dbReference type="ChEBI" id="CHEBI:16489"/>
        <label>1</label>
    </ligand>
</feature>
<feature type="binding site" evidence="4">
    <location>
        <begin position="163"/>
        <end position="168"/>
    </location>
    <ligand>
        <name>2,4-dihydroxypteridine</name>
        <dbReference type="ChEBI" id="CHEBI:16489"/>
        <label>1</label>
    </ligand>
</feature>
<keyword id="KW-0002">3D-structure</keyword>
<keyword id="KW-1185">Reference proteome</keyword>
<keyword id="KW-0677">Repeat</keyword>
<keyword id="KW-0686">Riboflavin biosynthesis</keyword>
<keyword id="KW-0808">Transferase</keyword>
<name>RISA_BRUA2</name>